<reference key="1">
    <citation type="journal article" date="1997" name="DNA Res.">
        <title>Structural analysis of Arabidopsis thaliana chromosome 5. III. Sequence features of the regions of 1,191,918 bp covered by seventeen physically assigned P1 clones.</title>
        <authorList>
            <person name="Nakamura Y."/>
            <person name="Sato S."/>
            <person name="Kaneko T."/>
            <person name="Kotani H."/>
            <person name="Asamizu E."/>
            <person name="Miyajima N."/>
            <person name="Tabata S."/>
        </authorList>
    </citation>
    <scope>NUCLEOTIDE SEQUENCE [LARGE SCALE GENOMIC DNA]</scope>
    <source>
        <strain>cv. Columbia</strain>
    </source>
</reference>
<reference key="2">
    <citation type="journal article" date="2017" name="Plant J.">
        <title>Araport11: a complete reannotation of the Arabidopsis thaliana reference genome.</title>
        <authorList>
            <person name="Cheng C.Y."/>
            <person name="Krishnakumar V."/>
            <person name="Chan A.P."/>
            <person name="Thibaud-Nissen F."/>
            <person name="Schobel S."/>
            <person name="Town C.D."/>
        </authorList>
    </citation>
    <scope>GENOME REANNOTATION</scope>
    <source>
        <strain>cv. Columbia</strain>
    </source>
</reference>
<reference key="3">
    <citation type="journal article" date="2003" name="Science">
        <title>Empirical analysis of transcriptional activity in the Arabidopsis genome.</title>
        <authorList>
            <person name="Yamada K."/>
            <person name="Lim J."/>
            <person name="Dale J.M."/>
            <person name="Chen H."/>
            <person name="Shinn P."/>
            <person name="Palm C.J."/>
            <person name="Southwick A.M."/>
            <person name="Wu H.C."/>
            <person name="Kim C.J."/>
            <person name="Nguyen M."/>
            <person name="Pham P.K."/>
            <person name="Cheuk R.F."/>
            <person name="Karlin-Newmann G."/>
            <person name="Liu S.X."/>
            <person name="Lam B."/>
            <person name="Sakano H."/>
            <person name="Wu T."/>
            <person name="Yu G."/>
            <person name="Miranda M."/>
            <person name="Quach H.L."/>
            <person name="Tripp M."/>
            <person name="Chang C.H."/>
            <person name="Lee J.M."/>
            <person name="Toriumi M.J."/>
            <person name="Chan M.M."/>
            <person name="Tang C.C."/>
            <person name="Onodera C.S."/>
            <person name="Deng J.M."/>
            <person name="Akiyama K."/>
            <person name="Ansari Y."/>
            <person name="Arakawa T."/>
            <person name="Banh J."/>
            <person name="Banno F."/>
            <person name="Bowser L."/>
            <person name="Brooks S.Y."/>
            <person name="Carninci P."/>
            <person name="Chao Q."/>
            <person name="Choy N."/>
            <person name="Enju A."/>
            <person name="Goldsmith A.D."/>
            <person name="Gurjal M."/>
            <person name="Hansen N.F."/>
            <person name="Hayashizaki Y."/>
            <person name="Johnson-Hopson C."/>
            <person name="Hsuan V.W."/>
            <person name="Iida K."/>
            <person name="Karnes M."/>
            <person name="Khan S."/>
            <person name="Koesema E."/>
            <person name="Ishida J."/>
            <person name="Jiang P.X."/>
            <person name="Jones T."/>
            <person name="Kawai J."/>
            <person name="Kamiya A."/>
            <person name="Meyers C."/>
            <person name="Nakajima M."/>
            <person name="Narusaka M."/>
            <person name="Seki M."/>
            <person name="Sakurai T."/>
            <person name="Satou M."/>
            <person name="Tamse R."/>
            <person name="Vaysberg M."/>
            <person name="Wallender E.K."/>
            <person name="Wong C."/>
            <person name="Yamamura Y."/>
            <person name="Yuan S."/>
            <person name="Shinozaki K."/>
            <person name="Davis R.W."/>
            <person name="Theologis A."/>
            <person name="Ecker J.R."/>
        </authorList>
    </citation>
    <scope>NUCLEOTIDE SEQUENCE [LARGE SCALE MRNA]</scope>
    <source>
        <strain>cv. Columbia</strain>
    </source>
</reference>
<reference key="4">
    <citation type="submission" date="2002-03" db="EMBL/GenBank/DDBJ databases">
        <title>Full-length cDNA from Arabidopsis thaliana.</title>
        <authorList>
            <person name="Brover V.V."/>
            <person name="Troukhan M.E."/>
            <person name="Alexandrov N.A."/>
            <person name="Lu Y.-P."/>
            <person name="Flavell R.B."/>
            <person name="Feldmann K.A."/>
        </authorList>
    </citation>
    <scope>NUCLEOTIDE SEQUENCE [LARGE SCALE MRNA]</scope>
</reference>
<reference key="5">
    <citation type="journal article" date="2003" name="Plant Cell Physiol.">
        <title>Functional differentiation of peroxisomes revealed by expression profiles of peroxisomal genes in Arabidopsis thaliana.</title>
        <authorList>
            <person name="Kamada T."/>
            <person name="Nito K."/>
            <person name="Hayashi H."/>
            <person name="Mano S."/>
            <person name="Hayashi M."/>
            <person name="Nishimura M."/>
        </authorList>
    </citation>
    <scope>TISSUE SPECIFICITY</scope>
</reference>
<reference key="6">
    <citation type="journal article" date="2004" name="J. Biol. Chem.">
        <title>Plants express a lipid transfer protein with high similarity to mammalian sterol carrier protein-2.</title>
        <authorList>
            <person name="Edqvist J."/>
            <person name="Roennberg E."/>
            <person name="Rosenquist S."/>
            <person name="Blomqvist K."/>
            <person name="Viitanen L."/>
            <person name="Salminen T.A."/>
            <person name="Nylund M."/>
            <person name="Tuuf J."/>
            <person name="Mattjus P."/>
        </authorList>
    </citation>
    <scope>FUNCTION</scope>
    <scope>SUBCELLULAR LOCATION</scope>
    <scope>TISSUE SPECIFICITY</scope>
    <scope>GENE FAMILY</scope>
    <source>
        <strain>cv. Columbia</strain>
    </source>
</reference>
<reference key="7">
    <citation type="journal article" date="2008" name="J. Exp. Bot.">
        <title>Arabidopsis sterol carrier protein-2 is required for normal development of seeds and seedlings.</title>
        <authorList>
            <person name="Zheng B.S."/>
            <person name="Roennberg E."/>
            <person name="Viitanen L."/>
            <person name="Salminen T.A."/>
            <person name="Lundgren K."/>
            <person name="Moritz T."/>
            <person name="Edqvist J."/>
        </authorList>
    </citation>
    <scope>FUNCTION</scope>
    <scope>DISRUPTION PHENOTYPE</scope>
    <scope>TISSUE SPECIFICITY</scope>
    <scope>DEVELOPMENTAL STAGE</scope>
    <scope>INDUCTION BY DARKNESS</scope>
    <source>
        <strain>cv. Columbia</strain>
    </source>
</reference>
<accession>Q9FMN0</accession>
<comment type="function">
    <text evidence="3 4">Enhances the transfer of lipids between membranes in vitro (PubMed:15456765). Active on phosphatidylcholine (PC), 1-palmitoyl 2-oleoyl phosphatidylcholine (POPC) and ergosterol, and, to a lower extent, dimyristoyl phosphatidic acid, stigmasterol, desmosterol, beta-sitosterol and steryl glucoside (PubMed:15456765). Inactive or poorly active on palmitic acid, stearoyl-coenzyme A, cholesterol, glucosylceramide and ceramide (PubMed:15456765). Required during seeds and seedlings development (PubMed:18687588).</text>
</comment>
<comment type="subcellular location">
    <subcellularLocation>
        <location evidence="3">Peroxisome</location>
    </subcellularLocation>
</comment>
<comment type="tissue specificity">
    <text evidence="2 3 4">Expressed in most tissues including seedlings, cotyledons, inflorescence, leaves, stems, roots, siliques and flower buds, with the highest levels in floral tissues and in maturing seeds.</text>
</comment>
<comment type="developmental stage">
    <text evidence="4">In seeds, observed mainly in the endosperm and the embryo (PubMed:18687588). In seedlings, detected in vascular tissues and hydathodes of cotyledons (PubMed:18687588). Later expressed in trichomes of rosette leaves (PubMed:18687588). In flowers, accumulates in the receptacles, in vascular tissues of sepals and petals, in the style and stigma of the carpels, and in anthers, filaments, and pollen (PubMed:18687588). Also present in siliques funiculi (PubMed:18687588).</text>
</comment>
<comment type="induction">
    <text evidence="4">Accumulates at higher levels in dark-grown seedlings (PubMed:18687588). Induced by sucrose (PubMed:18687588).</text>
</comment>
<comment type="disruption phenotype">
    <text evidence="4">Altered seed morphology and delayed seed germination as well as inhibited root elongation in the dark; an exogenous carbon source is required to recover from the delayed seedling establishment. Reduced levels of glutamine, pyroglutamic acid, aspartate, beta-alanine, fumaric acid, glyceraldehyde and ribose, but increased accumulation of serine, glycine, asparagine, 3-cyanoalanine and 5-methylthiopentanitrile.</text>
</comment>
<organism>
    <name type="scientific">Arabidopsis thaliana</name>
    <name type="common">Mouse-ear cress</name>
    <dbReference type="NCBI Taxonomy" id="3702"/>
    <lineage>
        <taxon>Eukaryota</taxon>
        <taxon>Viridiplantae</taxon>
        <taxon>Streptophyta</taxon>
        <taxon>Embryophyta</taxon>
        <taxon>Tracheophyta</taxon>
        <taxon>Spermatophyta</taxon>
        <taxon>Magnoliopsida</taxon>
        <taxon>eudicotyledons</taxon>
        <taxon>Gunneridae</taxon>
        <taxon>Pentapetalae</taxon>
        <taxon>rosids</taxon>
        <taxon>malvids</taxon>
        <taxon>Brassicales</taxon>
        <taxon>Brassicaceae</taxon>
        <taxon>Camelineae</taxon>
        <taxon>Arabidopsis</taxon>
    </lineage>
</organism>
<name>SCP2_ARATH</name>
<keyword id="KW-0445">Lipid transport</keyword>
<keyword id="KW-0576">Peroxisome</keyword>
<keyword id="KW-1185">Reference proteome</keyword>
<keyword id="KW-0813">Transport</keyword>
<dbReference type="EMBL" id="AB008264">
    <property type="protein sequence ID" value="BAB09190.1"/>
    <property type="molecule type" value="Genomic_DNA"/>
</dbReference>
<dbReference type="EMBL" id="CP002688">
    <property type="protein sequence ID" value="AED94880.1"/>
    <property type="molecule type" value="Genomic_DNA"/>
</dbReference>
<dbReference type="EMBL" id="AY050909">
    <property type="protein sequence ID" value="AAK93586.1"/>
    <property type="molecule type" value="mRNA"/>
</dbReference>
<dbReference type="EMBL" id="AY117215">
    <property type="protein sequence ID" value="AAM51290.1"/>
    <property type="molecule type" value="mRNA"/>
</dbReference>
<dbReference type="EMBL" id="AY087906">
    <property type="protein sequence ID" value="AAM65457.1"/>
    <property type="molecule type" value="mRNA"/>
</dbReference>
<dbReference type="RefSeq" id="NP_199103.1">
    <property type="nucleotide sequence ID" value="NM_123654.4"/>
</dbReference>
<dbReference type="SMR" id="Q9FMN0"/>
<dbReference type="FunCoup" id="Q9FMN0">
    <property type="interactions" value="1616"/>
</dbReference>
<dbReference type="STRING" id="3702.Q9FMN0"/>
<dbReference type="iPTMnet" id="Q9FMN0"/>
<dbReference type="MetOSite" id="Q9FMN0"/>
<dbReference type="PaxDb" id="3702-AT5G42890.1"/>
<dbReference type="ProMEX" id="Q9FMN0"/>
<dbReference type="ProteomicsDB" id="191258"/>
<dbReference type="EnsemblPlants" id="AT5G42890.1">
    <property type="protein sequence ID" value="AT5G42890.1"/>
    <property type="gene ID" value="AT5G42890"/>
</dbReference>
<dbReference type="GeneID" id="834300"/>
<dbReference type="Gramene" id="AT5G42890.1">
    <property type="protein sequence ID" value="AT5G42890.1"/>
    <property type="gene ID" value="AT5G42890"/>
</dbReference>
<dbReference type="KEGG" id="ath:AT5G42890"/>
<dbReference type="Araport" id="AT5G42890"/>
<dbReference type="TAIR" id="AT5G42890">
    <property type="gene designation" value="SCP2"/>
</dbReference>
<dbReference type="eggNOG" id="KOG4170">
    <property type="taxonomic scope" value="Eukaryota"/>
</dbReference>
<dbReference type="HOGENOM" id="CLU_105945_3_1_1"/>
<dbReference type="InParanoid" id="Q9FMN0"/>
<dbReference type="OMA" id="EQMKQHF"/>
<dbReference type="OrthoDB" id="3592703at2759"/>
<dbReference type="PhylomeDB" id="Q9FMN0"/>
<dbReference type="PRO" id="PR:Q9FMN0"/>
<dbReference type="Proteomes" id="UP000006548">
    <property type="component" value="Chromosome 5"/>
</dbReference>
<dbReference type="ExpressionAtlas" id="Q9FMN0">
    <property type="expression patterns" value="baseline and differential"/>
</dbReference>
<dbReference type="GO" id="GO:0005777">
    <property type="term" value="C:peroxisome"/>
    <property type="evidence" value="ECO:0000314"/>
    <property type="project" value="UniProtKB"/>
</dbReference>
<dbReference type="GO" id="GO:0006635">
    <property type="term" value="P:fatty acid beta-oxidation"/>
    <property type="evidence" value="ECO:0000270"/>
    <property type="project" value="TAIR"/>
</dbReference>
<dbReference type="GO" id="GO:0046487">
    <property type="term" value="P:glyoxylate metabolic process"/>
    <property type="evidence" value="ECO:0000315"/>
    <property type="project" value="TAIR"/>
</dbReference>
<dbReference type="GO" id="GO:0032365">
    <property type="term" value="P:intracellular lipid transport"/>
    <property type="evidence" value="ECO:0000314"/>
    <property type="project" value="UniProtKB"/>
</dbReference>
<dbReference type="GO" id="GO:0009646">
    <property type="term" value="P:response to absence of light"/>
    <property type="evidence" value="ECO:0000270"/>
    <property type="project" value="UniProtKB"/>
</dbReference>
<dbReference type="GO" id="GO:0009744">
    <property type="term" value="P:response to sucrose"/>
    <property type="evidence" value="ECO:0000270"/>
    <property type="project" value="UniProtKB"/>
</dbReference>
<dbReference type="GO" id="GO:0009845">
    <property type="term" value="P:seed germination"/>
    <property type="evidence" value="ECO:0000315"/>
    <property type="project" value="TAIR"/>
</dbReference>
<dbReference type="GO" id="GO:0048317">
    <property type="term" value="P:seed morphogenesis"/>
    <property type="evidence" value="ECO:0000315"/>
    <property type="project" value="UniProtKB"/>
</dbReference>
<dbReference type="FunFam" id="3.30.1050.10:FF:000006">
    <property type="entry name" value="Non-specific lipid-transfer protein-like 1"/>
    <property type="match status" value="1"/>
</dbReference>
<dbReference type="Gene3D" id="3.30.1050.10">
    <property type="entry name" value="SCP2 sterol-binding domain"/>
    <property type="match status" value="1"/>
</dbReference>
<dbReference type="InterPro" id="IPR003033">
    <property type="entry name" value="SCP2_sterol-bd_dom"/>
</dbReference>
<dbReference type="InterPro" id="IPR036527">
    <property type="entry name" value="SCP2_sterol-bd_dom_sf"/>
</dbReference>
<dbReference type="PANTHER" id="PTHR10094:SF25">
    <property type="entry name" value="SCP2 STEROL-BINDING DOMAIN-CONTAINING PROTEIN 1"/>
    <property type="match status" value="1"/>
</dbReference>
<dbReference type="PANTHER" id="PTHR10094">
    <property type="entry name" value="STEROL CARRIER PROTEIN 2 SCP-2 FAMILY PROTEIN"/>
    <property type="match status" value="1"/>
</dbReference>
<dbReference type="Pfam" id="PF02036">
    <property type="entry name" value="SCP2"/>
    <property type="match status" value="1"/>
</dbReference>
<dbReference type="SUPFAM" id="SSF55718">
    <property type="entry name" value="SCP-like"/>
    <property type="match status" value="1"/>
</dbReference>
<evidence type="ECO:0000255" key="1"/>
<evidence type="ECO:0000269" key="2">
    <source>
    </source>
</evidence>
<evidence type="ECO:0000269" key="3">
    <source>
    </source>
</evidence>
<evidence type="ECO:0000269" key="4">
    <source>
    </source>
</evidence>
<evidence type="ECO:0000303" key="5">
    <source>
    </source>
</evidence>
<evidence type="ECO:0000312" key="6">
    <source>
        <dbReference type="Araport" id="AT5G42890"/>
    </source>
</evidence>
<evidence type="ECO:0000312" key="7">
    <source>
        <dbReference type="EMBL" id="BAB09190.1"/>
    </source>
</evidence>
<proteinExistence type="evidence at transcript level"/>
<gene>
    <name evidence="5" type="primary">SCP2</name>
    <name evidence="6" type="ordered locus">At5g42890</name>
    <name evidence="7" type="ORF">MBD2.8</name>
</gene>
<protein>
    <recommendedName>
        <fullName evidence="5">Sterol carrier protein 2</fullName>
        <shortName evidence="5">AtSCP2</shortName>
    </recommendedName>
</protein>
<sequence length="123" mass="13568">MANTQLKSDAIMDMMKEHLSTDAGKEVTEKIGLVYQINIAPKKLGFEEVTYIVDLKKGEVTKGKYEGGKVDATFSFKDDDFVKVATGKMNPQMAFIRGAMKIKGSLSAAQKFTPDIFPKPSKL</sequence>
<feature type="chain" id="PRO_0000448701" description="Sterol carrier protein 2">
    <location>
        <begin position="1"/>
        <end position="123"/>
    </location>
</feature>
<feature type="domain" description="SCP2" evidence="1">
    <location>
        <begin position="16"/>
        <end position="113"/>
    </location>
</feature>
<feature type="short sequence motif" description="Microbody targeting signal" evidence="1">
    <location>
        <begin position="121"/>
        <end position="123"/>
    </location>
</feature>